<evidence type="ECO:0000255" key="1">
    <source>
        <dbReference type="PROSITE-ProRule" id="PRU00159"/>
    </source>
</evidence>
<evidence type="ECO:0000255" key="2">
    <source>
        <dbReference type="PROSITE-ProRule" id="PRU10027"/>
    </source>
</evidence>
<evidence type="ECO:0000256" key="3">
    <source>
        <dbReference type="SAM" id="MobiDB-lite"/>
    </source>
</evidence>
<evidence type="ECO:0000269" key="4">
    <source>
    </source>
</evidence>
<evidence type="ECO:0000269" key="5">
    <source>
    </source>
</evidence>
<evidence type="ECO:0000269" key="6">
    <source>
    </source>
</evidence>
<evidence type="ECO:0000269" key="7">
    <source>
    </source>
</evidence>
<evidence type="ECO:0000269" key="8">
    <source>
    </source>
</evidence>
<evidence type="ECO:0000305" key="9"/>
<evidence type="ECO:0007744" key="10">
    <source>
    </source>
</evidence>
<evidence type="ECO:0007744" key="11">
    <source>
    </source>
</evidence>
<evidence type="ECO:0007744" key="12">
    <source>
    </source>
</evidence>
<evidence type="ECO:0007744" key="13">
    <source>
    </source>
</evidence>
<evidence type="ECO:0007744" key="14">
    <source>
    </source>
</evidence>
<gene>
    <name type="primary">PSK1</name>
    <name type="ordered locus">YAL017W</name>
    <name type="ORF">FUN31</name>
    <name type="ORF">YAL002</name>
</gene>
<dbReference type="EC" id="2.7.11.1"/>
<dbReference type="EMBL" id="L05146">
    <property type="protein sequence ID" value="AAC04940.1"/>
    <property type="molecule type" value="Genomic_DNA"/>
</dbReference>
<dbReference type="EMBL" id="BK006935">
    <property type="protein sequence ID" value="DAA06971.2"/>
    <property type="molecule type" value="Genomic_DNA"/>
</dbReference>
<dbReference type="PIR" id="S33653">
    <property type="entry name" value="S33653"/>
</dbReference>
<dbReference type="RefSeq" id="NP_009385.2">
    <property type="nucleotide sequence ID" value="NM_001178162.2"/>
</dbReference>
<dbReference type="SMR" id="P31374"/>
<dbReference type="BioGRID" id="31749">
    <property type="interactions" value="132"/>
</dbReference>
<dbReference type="DIP" id="DIP-6267N"/>
<dbReference type="FunCoup" id="P31374">
    <property type="interactions" value="556"/>
</dbReference>
<dbReference type="IntAct" id="P31374">
    <property type="interactions" value="22"/>
</dbReference>
<dbReference type="MINT" id="P31374"/>
<dbReference type="STRING" id="4932.YAL017W"/>
<dbReference type="CarbonylDB" id="P31374"/>
<dbReference type="GlyGen" id="P31374">
    <property type="glycosylation" value="3 sites, 1 O-linked glycan (3 sites)"/>
</dbReference>
<dbReference type="iPTMnet" id="P31374"/>
<dbReference type="PaxDb" id="4932-YAL017W"/>
<dbReference type="PeptideAtlas" id="P31374"/>
<dbReference type="EnsemblFungi" id="YAL017W_mRNA">
    <property type="protein sequence ID" value="YAL017W"/>
    <property type="gene ID" value="YAL017W"/>
</dbReference>
<dbReference type="GeneID" id="851216"/>
<dbReference type="KEGG" id="sce:YAL017W"/>
<dbReference type="AGR" id="SGD:S000000015"/>
<dbReference type="SGD" id="S000000015">
    <property type="gene designation" value="PSK1"/>
</dbReference>
<dbReference type="VEuPathDB" id="FungiDB:YAL017W"/>
<dbReference type="eggNOG" id="KOG1152">
    <property type="taxonomic scope" value="Eukaryota"/>
</dbReference>
<dbReference type="GeneTree" id="ENSGT00940000159035"/>
<dbReference type="HOGENOM" id="CLU_004134_1_0_1"/>
<dbReference type="InParanoid" id="P31374"/>
<dbReference type="OMA" id="MDESECR"/>
<dbReference type="OrthoDB" id="10252171at2759"/>
<dbReference type="BioCyc" id="YEAST:G3O-28829-MONOMER"/>
<dbReference type="BioGRID-ORCS" id="851216">
    <property type="hits" value="0 hits in 13 CRISPR screens"/>
</dbReference>
<dbReference type="PRO" id="PR:P31374"/>
<dbReference type="Proteomes" id="UP000002311">
    <property type="component" value="Chromosome I"/>
</dbReference>
<dbReference type="RNAct" id="P31374">
    <property type="molecule type" value="protein"/>
</dbReference>
<dbReference type="GO" id="GO:0005737">
    <property type="term" value="C:cytoplasm"/>
    <property type="evidence" value="ECO:0000314"/>
    <property type="project" value="SGD"/>
</dbReference>
<dbReference type="GO" id="GO:0005829">
    <property type="term" value="C:cytosol"/>
    <property type="evidence" value="ECO:0000318"/>
    <property type="project" value="GO_Central"/>
</dbReference>
<dbReference type="GO" id="GO:0005634">
    <property type="term" value="C:nucleus"/>
    <property type="evidence" value="ECO:0000318"/>
    <property type="project" value="GO_Central"/>
</dbReference>
<dbReference type="GO" id="GO:0005524">
    <property type="term" value="F:ATP binding"/>
    <property type="evidence" value="ECO:0007669"/>
    <property type="project" value="UniProtKB-KW"/>
</dbReference>
<dbReference type="GO" id="GO:0004672">
    <property type="term" value="F:protein kinase activity"/>
    <property type="evidence" value="ECO:0007005"/>
    <property type="project" value="SGD"/>
</dbReference>
<dbReference type="GO" id="GO:0106310">
    <property type="term" value="F:protein serine kinase activity"/>
    <property type="evidence" value="ECO:0007669"/>
    <property type="project" value="RHEA"/>
</dbReference>
<dbReference type="GO" id="GO:0004674">
    <property type="term" value="F:protein serine/threonine kinase activity"/>
    <property type="evidence" value="ECO:0000315"/>
    <property type="project" value="SGD"/>
</dbReference>
<dbReference type="GO" id="GO:0035556">
    <property type="term" value="P:intracellular signal transduction"/>
    <property type="evidence" value="ECO:0000318"/>
    <property type="project" value="GO_Central"/>
</dbReference>
<dbReference type="GO" id="GO:0045719">
    <property type="term" value="P:negative regulation of glycogen biosynthetic process"/>
    <property type="evidence" value="ECO:0000315"/>
    <property type="project" value="SGD"/>
</dbReference>
<dbReference type="GO" id="GO:0060917">
    <property type="term" value="P:regulation of (1-&gt;6)-beta-D-glucan biosynthetic process"/>
    <property type="evidence" value="ECO:0000316"/>
    <property type="project" value="SGD"/>
</dbReference>
<dbReference type="GO" id="GO:0006417">
    <property type="term" value="P:regulation of translation"/>
    <property type="evidence" value="ECO:0007669"/>
    <property type="project" value="UniProtKB-KW"/>
</dbReference>
<dbReference type="CDD" id="cd00130">
    <property type="entry name" value="PAS"/>
    <property type="match status" value="1"/>
</dbReference>
<dbReference type="CDD" id="cd14004">
    <property type="entry name" value="STKc_PASK"/>
    <property type="match status" value="1"/>
</dbReference>
<dbReference type="FunFam" id="1.10.510.10:FF:000320">
    <property type="entry name" value="Serine/threonine protein kinase"/>
    <property type="match status" value="1"/>
</dbReference>
<dbReference type="FunFam" id="3.30.200.20:FF:000314">
    <property type="entry name" value="Serine/threonine protein kinase"/>
    <property type="match status" value="1"/>
</dbReference>
<dbReference type="Gene3D" id="3.30.200.20">
    <property type="entry name" value="Phosphorylase Kinase, domain 1"/>
    <property type="match status" value="1"/>
</dbReference>
<dbReference type="Gene3D" id="1.10.510.10">
    <property type="entry name" value="Transferase(Phosphotransferase) domain 1"/>
    <property type="match status" value="1"/>
</dbReference>
<dbReference type="InterPro" id="IPR011009">
    <property type="entry name" value="Kinase-like_dom_sf"/>
</dbReference>
<dbReference type="InterPro" id="IPR000014">
    <property type="entry name" value="PAS"/>
</dbReference>
<dbReference type="InterPro" id="IPR035965">
    <property type="entry name" value="PAS-like_dom_sf"/>
</dbReference>
<dbReference type="InterPro" id="IPR000719">
    <property type="entry name" value="Prot_kinase_dom"/>
</dbReference>
<dbReference type="InterPro" id="IPR008271">
    <property type="entry name" value="Ser/Thr_kinase_AS"/>
</dbReference>
<dbReference type="PANTHER" id="PTHR24346">
    <property type="entry name" value="MAP/MICROTUBULE AFFINITY-REGULATING KINASE"/>
    <property type="match status" value="1"/>
</dbReference>
<dbReference type="PANTHER" id="PTHR24346:SF51">
    <property type="entry name" value="PAS DOMAIN-CONTAINING SERINE_THREONINE-PROTEIN KINASE"/>
    <property type="match status" value="1"/>
</dbReference>
<dbReference type="Pfam" id="PF00069">
    <property type="entry name" value="Pkinase"/>
    <property type="match status" value="1"/>
</dbReference>
<dbReference type="SMART" id="SM00091">
    <property type="entry name" value="PAS"/>
    <property type="match status" value="2"/>
</dbReference>
<dbReference type="SMART" id="SM00220">
    <property type="entry name" value="S_TKc"/>
    <property type="match status" value="1"/>
</dbReference>
<dbReference type="SUPFAM" id="SSF56112">
    <property type="entry name" value="Protein kinase-like (PK-like)"/>
    <property type="match status" value="1"/>
</dbReference>
<dbReference type="SUPFAM" id="SSF55785">
    <property type="entry name" value="PYP-like sensor domain (PAS domain)"/>
    <property type="match status" value="1"/>
</dbReference>
<dbReference type="PROSITE" id="PS50011">
    <property type="entry name" value="PROTEIN_KINASE_DOM"/>
    <property type="match status" value="1"/>
</dbReference>
<dbReference type="PROSITE" id="PS00108">
    <property type="entry name" value="PROTEIN_KINASE_ST"/>
    <property type="match status" value="1"/>
</dbReference>
<proteinExistence type="evidence at protein level"/>
<organism>
    <name type="scientific">Saccharomyces cerevisiae (strain ATCC 204508 / S288c)</name>
    <name type="common">Baker's yeast</name>
    <dbReference type="NCBI Taxonomy" id="559292"/>
    <lineage>
        <taxon>Eukaryota</taxon>
        <taxon>Fungi</taxon>
        <taxon>Dikarya</taxon>
        <taxon>Ascomycota</taxon>
        <taxon>Saccharomycotina</taxon>
        <taxon>Saccharomycetes</taxon>
        <taxon>Saccharomycetales</taxon>
        <taxon>Saccharomycetaceae</taxon>
        <taxon>Saccharomyces</taxon>
    </lineage>
</organism>
<name>PSK1_YEAST</name>
<feature type="chain" id="PRO_0000086042" description="Serine/threonine-protein kinase PSK1">
    <location>
        <begin position="1"/>
        <end position="1356"/>
    </location>
</feature>
<feature type="domain" description="PAS 1">
    <location>
        <begin position="450"/>
        <end position="518"/>
    </location>
</feature>
<feature type="domain" description="PAS 2">
    <location>
        <begin position="738"/>
        <end position="807"/>
    </location>
</feature>
<feature type="domain" description="Protein kinase" evidence="1">
    <location>
        <begin position="1096"/>
        <end position="1354"/>
    </location>
</feature>
<feature type="region of interest" description="Disordered" evidence="3">
    <location>
        <begin position="20"/>
        <end position="115"/>
    </location>
</feature>
<feature type="region of interest" description="Disordered" evidence="3">
    <location>
        <begin position="592"/>
        <end position="612"/>
    </location>
</feature>
<feature type="region of interest" description="Disordered" evidence="3">
    <location>
        <begin position="627"/>
        <end position="660"/>
    </location>
</feature>
<feature type="region of interest" description="Disordered" evidence="3">
    <location>
        <begin position="948"/>
        <end position="972"/>
    </location>
</feature>
<feature type="region of interest" description="Disordered" evidence="3">
    <location>
        <begin position="1021"/>
        <end position="1066"/>
    </location>
</feature>
<feature type="compositionally biased region" description="Polar residues" evidence="3">
    <location>
        <begin position="26"/>
        <end position="37"/>
    </location>
</feature>
<feature type="compositionally biased region" description="Polar residues" evidence="3">
    <location>
        <begin position="54"/>
        <end position="64"/>
    </location>
</feature>
<feature type="compositionally biased region" description="Low complexity" evidence="3">
    <location>
        <begin position="99"/>
        <end position="115"/>
    </location>
</feature>
<feature type="compositionally biased region" description="Low complexity" evidence="3">
    <location>
        <begin position="592"/>
        <end position="608"/>
    </location>
</feature>
<feature type="compositionally biased region" description="Polar residues" evidence="3">
    <location>
        <begin position="952"/>
        <end position="961"/>
    </location>
</feature>
<feature type="compositionally biased region" description="Polar residues" evidence="3">
    <location>
        <begin position="1021"/>
        <end position="1032"/>
    </location>
</feature>
<feature type="active site" description="Proton acceptor" evidence="1 2">
    <location>
        <position position="1230"/>
    </location>
</feature>
<feature type="binding site" evidence="1">
    <location>
        <begin position="1102"/>
        <end position="1110"/>
    </location>
    <ligand>
        <name>ATP</name>
        <dbReference type="ChEBI" id="CHEBI:30616"/>
    </ligand>
</feature>
<feature type="binding site" evidence="1">
    <location>
        <position position="1125"/>
    </location>
    <ligand>
        <name>ATP</name>
        <dbReference type="ChEBI" id="CHEBI:30616"/>
    </ligand>
</feature>
<feature type="modified residue" description="Phosphoserine" evidence="13">
    <location>
        <position position="10"/>
    </location>
</feature>
<feature type="modified residue" description="Phosphoserine" evidence="13">
    <location>
        <position position="192"/>
    </location>
</feature>
<feature type="modified residue" description="Phosphoserine" evidence="14">
    <location>
        <position position="202"/>
    </location>
</feature>
<feature type="modified residue" description="Phosphoserine" evidence="14">
    <location>
        <position position="255"/>
    </location>
</feature>
<feature type="modified residue" description="Phosphoserine" evidence="12">
    <location>
        <position position="286"/>
    </location>
</feature>
<feature type="modified residue" description="Phosphoserine" evidence="13">
    <location>
        <position position="327"/>
    </location>
</feature>
<feature type="modified residue" description="Phosphoserine" evidence="13">
    <location>
        <position position="926"/>
    </location>
</feature>
<feature type="modified residue" description="Phosphoserine" evidence="10">
    <location>
        <position position="1018"/>
    </location>
</feature>
<feature type="modified residue" description="Phosphoserine" evidence="14">
    <location>
        <position position="1023"/>
    </location>
</feature>
<feature type="modified residue" description="Phosphoserine" evidence="12 13">
    <location>
        <position position="1035"/>
    </location>
</feature>
<feature type="modified residue" description="Phosphoserine" evidence="13 14">
    <location>
        <position position="1055"/>
    </location>
</feature>
<feature type="modified residue" description="Phosphothreonine" evidence="11">
    <location>
        <position position="1079"/>
    </location>
</feature>
<feature type="sequence conflict" description="In Ref. 1; no nucleotide entry, 2; no nucleotide entry, 3; no nucleotide entry and 4; AAC04940." evidence="9" ref="1 2 3 4">
    <original>E</original>
    <variation>Q</variation>
    <location>
        <position position="73"/>
    </location>
</feature>
<protein>
    <recommendedName>
        <fullName>Serine/threonine-protein kinase PSK1</fullName>
        <ecNumber>2.7.11.1</ecNumber>
    </recommendedName>
    <alternativeName>
        <fullName>PAS kinase 1</fullName>
    </alternativeName>
</protein>
<accession>P31374</accession>
<accession>D6VPK1</accession>
<reference key="1">
    <citation type="journal article" date="1993" name="Genome">
        <title>Sequencing of chromosome I from Saccharomyces cerevisiae: analysis of a 32 kb region between the LTE1 and SPO7 genes.</title>
        <authorList>
            <person name="Ouellette B.F.F."/>
            <person name="Clark M.W."/>
            <person name="Keng T."/>
            <person name="Storms R.K."/>
            <person name="Zhong W.-W."/>
            <person name="Zeng B."/>
            <person name="Fortin N."/>
            <person name="Delaney S."/>
            <person name="Barton A.B."/>
            <person name="Kaback D.B."/>
            <person name="Bussey H."/>
        </authorList>
    </citation>
    <scope>NUCLEOTIDE SEQUENCE [GENOMIC DNA]</scope>
    <source>
        <strain>ATCC 204511 / S288c / AB972</strain>
    </source>
</reference>
<reference key="2">
    <citation type="journal article" date="1992" name="Yeast">
        <title>Identification of a Saccharomyces cerevisiae homolog of the SNF2 transcriptional regulator in the DNA sequence of an 8.6 kb region in the LTE1-CYS1 interval on the left arm of chromosome I.</title>
        <authorList>
            <person name="Clark M.W."/>
            <person name="Zhong W.-W."/>
            <person name="Keng T."/>
            <person name="Storms R.K."/>
            <person name="Barton A.B."/>
            <person name="Kaback D.B."/>
            <person name="Bussey H."/>
        </authorList>
    </citation>
    <scope>NUCLEOTIDE SEQUENCE [GENOMIC DNA]</scope>
    <source>
        <strain>ATCC 204511 / S288c / AB972</strain>
    </source>
</reference>
<reference key="3">
    <citation type="journal article" date="1993" name="Yeast">
        <title>The YAL017 gene on the left arm of chromosome I of Saccharomyces cerevisiae encodes a putative serine/threonine protein kinase.</title>
        <authorList>
            <person name="Clark M.W."/>
            <person name="Zhong W.W."/>
            <person name="Keng T."/>
            <person name="Storms R.K."/>
            <person name="Ouellette B.F.F."/>
            <person name="Barton A."/>
            <person name="Kaback D.B."/>
            <person name="Bussey H."/>
        </authorList>
    </citation>
    <scope>NUCLEOTIDE SEQUENCE [GENOMIC DNA]</scope>
    <scope>FUNCTION</scope>
    <source>
        <strain>ATCC 204511 / S288c / AB972</strain>
    </source>
</reference>
<reference key="4">
    <citation type="journal article" date="1995" name="Proc. Natl. Acad. Sci. U.S.A.">
        <title>The nucleotide sequence of chromosome I from Saccharomyces cerevisiae.</title>
        <authorList>
            <person name="Bussey H."/>
            <person name="Kaback D.B."/>
            <person name="Zhong W.-W."/>
            <person name="Vo D.H."/>
            <person name="Clark M.W."/>
            <person name="Fortin N."/>
            <person name="Hall J."/>
            <person name="Ouellette B.F.F."/>
            <person name="Keng T."/>
            <person name="Barton A.B."/>
            <person name="Su Y."/>
            <person name="Davies C.J."/>
            <person name="Storms R.K."/>
        </authorList>
    </citation>
    <scope>NUCLEOTIDE SEQUENCE [LARGE SCALE GENOMIC DNA]</scope>
    <source>
        <strain>ATCC 204508 / S288c</strain>
    </source>
</reference>
<reference key="5">
    <citation type="journal article" date="2014" name="G3 (Bethesda)">
        <title>The reference genome sequence of Saccharomyces cerevisiae: Then and now.</title>
        <authorList>
            <person name="Engel S.R."/>
            <person name="Dietrich F.S."/>
            <person name="Fisk D.G."/>
            <person name="Binkley G."/>
            <person name="Balakrishnan R."/>
            <person name="Costanzo M.C."/>
            <person name="Dwight S.S."/>
            <person name="Hitz B.C."/>
            <person name="Karra K."/>
            <person name="Nash R.S."/>
            <person name="Weng S."/>
            <person name="Wong E.D."/>
            <person name="Lloyd P."/>
            <person name="Skrzypek M.S."/>
            <person name="Miyasato S.R."/>
            <person name="Simison M."/>
            <person name="Cherry J.M."/>
        </authorList>
    </citation>
    <scope>GENOME REANNOTATION</scope>
    <scope>SEQUENCE REVISION TO 73</scope>
    <source>
        <strain>ATCC 204508 / S288c</strain>
    </source>
</reference>
<reference key="6">
    <citation type="journal article" date="2001" name="Proc. Natl. Acad. Sci. U.S.A.">
        <title>PAS kinase: an evolutionarily conserved PAS domain-regulated serine/threonine kinase.</title>
        <authorList>
            <person name="Rutter J."/>
            <person name="Michnoff C.H."/>
            <person name="Harper S.M."/>
            <person name="Gardner K.H."/>
            <person name="McKnight S.L."/>
        </authorList>
    </citation>
    <scope>DOMAIN</scope>
</reference>
<reference key="7">
    <citation type="journal article" date="2002" name="Cell">
        <title>Coordinate regulation of sugar flux and translation by PAS kinase.</title>
        <authorList>
            <person name="Rutter J."/>
            <person name="Probst B.L."/>
            <person name="McKnight S.L."/>
        </authorList>
    </citation>
    <scope>FUNCTION</scope>
</reference>
<reference key="8">
    <citation type="journal article" date="2003" name="Nature">
        <title>Global analysis of protein localization in budding yeast.</title>
        <authorList>
            <person name="Huh W.-K."/>
            <person name="Falvo J.V."/>
            <person name="Gerke L.C."/>
            <person name="Carroll A.S."/>
            <person name="Howson R.W."/>
            <person name="Weissman J.S."/>
            <person name="O'Shea E.K."/>
        </authorList>
    </citation>
    <scope>SUBCELLULAR LOCATION [LARGE SCALE ANALYSIS]</scope>
</reference>
<reference key="9">
    <citation type="journal article" date="2003" name="Nature">
        <title>Global analysis of protein expression in yeast.</title>
        <authorList>
            <person name="Ghaemmaghami S."/>
            <person name="Huh W.-K."/>
            <person name="Bower K."/>
            <person name="Howson R.W."/>
            <person name="Belle A."/>
            <person name="Dephoure N."/>
            <person name="O'Shea E.K."/>
            <person name="Weissman J.S."/>
        </authorList>
    </citation>
    <scope>LEVEL OF PROTEIN EXPRESSION [LARGE SCALE ANALYSIS]</scope>
</reference>
<reference key="10">
    <citation type="journal article" date="2005" name="Mol. Cell. Proteomics">
        <title>Quantitative phosphoproteomics applied to the yeast pheromone signaling pathway.</title>
        <authorList>
            <person name="Gruhler A."/>
            <person name="Olsen J.V."/>
            <person name="Mohammed S."/>
            <person name="Mortensen P."/>
            <person name="Faergeman N.J."/>
            <person name="Mann M."/>
            <person name="Jensen O.N."/>
        </authorList>
    </citation>
    <scope>PHOSPHORYLATION [LARGE SCALE ANALYSIS] AT SER-1018</scope>
    <scope>IDENTIFICATION BY MASS SPECTROMETRY [LARGE SCALE ANALYSIS]</scope>
    <source>
        <strain>YAL6B</strain>
    </source>
</reference>
<reference key="11">
    <citation type="journal article" date="2007" name="J. Proteome Res.">
        <title>Large-scale phosphorylation analysis of alpha-factor-arrested Saccharomyces cerevisiae.</title>
        <authorList>
            <person name="Li X."/>
            <person name="Gerber S.A."/>
            <person name="Rudner A.D."/>
            <person name="Beausoleil S.A."/>
            <person name="Haas W."/>
            <person name="Villen J."/>
            <person name="Elias J.E."/>
            <person name="Gygi S.P."/>
        </authorList>
    </citation>
    <scope>PHOSPHORYLATION [LARGE SCALE ANALYSIS] AT SER-286 AND SER-1035</scope>
    <scope>IDENTIFICATION BY MASS SPECTROMETRY [LARGE SCALE ANALYSIS]</scope>
    <source>
        <strain>ADR376</strain>
    </source>
</reference>
<reference key="12">
    <citation type="journal article" date="2007" name="Mol. Cell">
        <title>Regulation of glucose partitioning by PAS kinase and Ugp1 phosphorylation.</title>
        <authorList>
            <person name="Smith T.L."/>
            <person name="Rutter J."/>
        </authorList>
    </citation>
    <scope>FUNCTION</scope>
</reference>
<reference key="13">
    <citation type="journal article" date="2007" name="Proc. Natl. Acad. Sci. U.S.A.">
        <title>Analysis of phosphorylation sites on proteins from Saccharomyces cerevisiae by electron transfer dissociation (ETD) mass spectrometry.</title>
        <authorList>
            <person name="Chi A."/>
            <person name="Huttenhower C."/>
            <person name="Geer L.Y."/>
            <person name="Coon J.J."/>
            <person name="Syka J.E.P."/>
            <person name="Bai D.L."/>
            <person name="Shabanowitz J."/>
            <person name="Burke D.J."/>
            <person name="Troyanskaya O.G."/>
            <person name="Hunt D.F."/>
        </authorList>
    </citation>
    <scope>PHOSPHORYLATION [LARGE SCALE ANALYSIS] AT THR-1079</scope>
    <scope>IDENTIFICATION BY MASS SPECTROMETRY [LARGE SCALE ANALYSIS]</scope>
</reference>
<reference key="14">
    <citation type="journal article" date="2008" name="Mol. Cell. Proteomics">
        <title>A multidimensional chromatography technology for in-depth phosphoproteome analysis.</title>
        <authorList>
            <person name="Albuquerque C.P."/>
            <person name="Smolka M.B."/>
            <person name="Payne S.H."/>
            <person name="Bafna V."/>
            <person name="Eng J."/>
            <person name="Zhou H."/>
        </authorList>
    </citation>
    <scope>PHOSPHORYLATION [LARGE SCALE ANALYSIS] AT SER-10; SER-192; SER-327; SER-926; SER-1035 AND SER-1055</scope>
    <scope>IDENTIFICATION BY MASS SPECTROMETRY [LARGE SCALE ANALYSIS]</scope>
</reference>
<reference key="15">
    <citation type="journal article" date="2009" name="Science">
        <title>Global analysis of Cdk1 substrate phosphorylation sites provides insights into evolution.</title>
        <authorList>
            <person name="Holt L.J."/>
            <person name="Tuch B.B."/>
            <person name="Villen J."/>
            <person name="Johnson A.D."/>
            <person name="Gygi S.P."/>
            <person name="Morgan D.O."/>
        </authorList>
    </citation>
    <scope>PHOSPHORYLATION [LARGE SCALE ANALYSIS] AT SER-202; SER-255; SER-1023 AND SER-1055</scope>
    <scope>IDENTIFICATION BY MASS SPECTROMETRY [LARGE SCALE ANALYSIS]</scope>
</reference>
<sequence length="1356" mass="152332">MPYIGASNLSEHSFVNLKEKHAITHKGTSSSVASLQTPPSPDQENHIDNELENYDTSLSDVSTPNKKEGDEFEQSLRDTFASFRKTKPPPPLDFEQPRLPSTASSSVDSTVSSPLTDEDIKELEFLPNESTHSYSYNPLSPNSLAVRLRILKRSLEIIIQNPSMLLEPTPDDLPPLKEFAGRRSSLPRTSASANHLMNRNKSQIWNTTSATLNAFVNNTSSSSAASSALSNKKPGTPVFPNLDPTHSQTFHRANSLAYLPSILPEQDPLLKHNNSLFRGDYGNNISPERPSFRQPFKDQTSNLRNSSLLNERAYQEDETFLPHHGPSMDLLNEQRANLKSLLNLLNETLEKNTSERASDLHMISLFNLNKLMLGDPKKNNSERDKRTEKLKKILLDSLAEPFFEHYNFIGDNPIADTDELKEEIDEFTGSGDTTAITDIRPQQDYGRILRTFTSTKNSAPQAIFTCSQEDPWQFRAANDLACLVFGISQNAIRALTLMDLIHTDSRNFVLHKLLSTEGQEMVFTGEIIGIVQPETLSSSKVVWASFWAKRKNGLLVCVFEKVPCDYVDVLLNLDDFGAENIVDKCELLSDGPTLSSSSTLSLPKMASSPTGSKLEYSLERKILEKSYTKPTSTENRNGDENQLDGDSHSEPSLSSSPVRSKKSVKFANDIKDVKSISQSLAKLMDDVRNGVVFDPDDDLLPMPIKVCNHINETRYFTLNHLSYNIPCAVSSTVLEDELKLKIHSLPYQAGLFIVDSHTLDIVSSNKSILKNMFGYHFAELVGKSITEIIPSFPKFLQFINDKYPALDITLHKNKGLVLTEHFFRKIQAEIMGDRKSFYTSVGIDGLHRDGCEIKIDFQLRVMNSKVILLWVTHSRDVVFEEYNTNPSQLKMLKESELSLMSSASSSASSSKKSSSRISTGTLKDMSNLSTYEDLAHRTNKLKYEIGDDSRAHSQSTLSEQEQVPLENDKDSGEMMLADPEMKHKLELARIYSRDKSQFVKEGNFKVDENLIISKISLSPSTESLADSKSSGKGLSPLEEEKLIDENATENGLAGSPKDEDGIIMTNKRGNQPVSTFLRTPEKNIGAQKHVKKFSDFVSLQKMGEGAYGKVNLCIHKKNRYIVVIKMIFKERILVDTWVRDRKLGTIPSEIQIMATLNKKPHENILRLLDFFEDDDYYYIETPVHGETGCIDLFDLIEFKTNMTEFEAKLIFKQVVAGIKHLHDQGIVHRDIKDENVIVDSKGFVKIIDFGSAAYVKSGPFDVFVGTIDYAAPEVLGGNPYEGQPQDIWAIGILLYTVVFKENPFYNIDEILEGDLKFNNAEEVSEDCIELIKSILNRCVPKRPTIDDINNDKWLVI</sequence>
<comment type="function">
    <text evidence="4 7 8">Serine/threonine-protein kinase involved in the control of sugar metabolism and translation. Phosphorylates UGP1, which is required for normal glycogen and beta-(1,6)-glucan synthesis. This phosphorylation shifts glucose partitioning toward cell wall glucan synthesis at the expense of glycogen synthesis.</text>
</comment>
<comment type="catalytic activity">
    <reaction>
        <text>L-seryl-[protein] + ATP = O-phospho-L-seryl-[protein] + ADP + H(+)</text>
        <dbReference type="Rhea" id="RHEA:17989"/>
        <dbReference type="Rhea" id="RHEA-COMP:9863"/>
        <dbReference type="Rhea" id="RHEA-COMP:11604"/>
        <dbReference type="ChEBI" id="CHEBI:15378"/>
        <dbReference type="ChEBI" id="CHEBI:29999"/>
        <dbReference type="ChEBI" id="CHEBI:30616"/>
        <dbReference type="ChEBI" id="CHEBI:83421"/>
        <dbReference type="ChEBI" id="CHEBI:456216"/>
        <dbReference type="EC" id="2.7.11.1"/>
    </reaction>
</comment>
<comment type="catalytic activity">
    <reaction>
        <text>L-threonyl-[protein] + ATP = O-phospho-L-threonyl-[protein] + ADP + H(+)</text>
        <dbReference type="Rhea" id="RHEA:46608"/>
        <dbReference type="Rhea" id="RHEA-COMP:11060"/>
        <dbReference type="Rhea" id="RHEA-COMP:11605"/>
        <dbReference type="ChEBI" id="CHEBI:15378"/>
        <dbReference type="ChEBI" id="CHEBI:30013"/>
        <dbReference type="ChEBI" id="CHEBI:30616"/>
        <dbReference type="ChEBI" id="CHEBI:61977"/>
        <dbReference type="ChEBI" id="CHEBI:456216"/>
        <dbReference type="EC" id="2.7.11.1"/>
    </reaction>
</comment>
<comment type="interaction">
    <interactant intactId="EBI-9442">
        <id>P31374</id>
    </interactant>
    <interactant intactId="EBI-19987">
        <id>P32861</id>
        <label>UGP1</label>
    </interactant>
    <organismsDiffer>false</organismsDiffer>
    <experiments>4</experiments>
</comment>
<comment type="subcellular location">
    <subcellularLocation>
        <location evidence="5">Cytoplasm</location>
    </subcellularLocation>
</comment>
<comment type="miscellaneous">
    <text evidence="6">Present with 967 molecules/cell in log phase SD medium.</text>
</comment>
<comment type="similarity">
    <text evidence="1">Belongs to the protein kinase superfamily. Ser/Thr protein kinase family.</text>
</comment>
<keyword id="KW-0067">ATP-binding</keyword>
<keyword id="KW-0963">Cytoplasm</keyword>
<keyword id="KW-0418">Kinase</keyword>
<keyword id="KW-0547">Nucleotide-binding</keyword>
<keyword id="KW-0597">Phosphoprotein</keyword>
<keyword id="KW-1185">Reference proteome</keyword>
<keyword id="KW-0677">Repeat</keyword>
<keyword id="KW-0723">Serine/threonine-protein kinase</keyword>
<keyword id="KW-0808">Transferase</keyword>
<keyword id="KW-0810">Translation regulation</keyword>